<gene>
    <name type="ordered locus">Pnec_0318</name>
</gene>
<name>Y318_POLNS</name>
<dbReference type="EMBL" id="CP001010">
    <property type="protein sequence ID" value="ACB43611.1"/>
    <property type="molecule type" value="Genomic_DNA"/>
</dbReference>
<dbReference type="SMR" id="B1XTD4"/>
<dbReference type="STRING" id="452638.Pnec_0318"/>
<dbReference type="KEGG" id="pne:Pnec_0318"/>
<dbReference type="eggNOG" id="COG1666">
    <property type="taxonomic scope" value="Bacteria"/>
</dbReference>
<dbReference type="HOGENOM" id="CLU_099839_1_0_4"/>
<dbReference type="OrthoDB" id="9801447at2"/>
<dbReference type="GO" id="GO:0005829">
    <property type="term" value="C:cytosol"/>
    <property type="evidence" value="ECO:0007669"/>
    <property type="project" value="TreeGrafter"/>
</dbReference>
<dbReference type="GO" id="GO:0000166">
    <property type="term" value="F:nucleotide binding"/>
    <property type="evidence" value="ECO:0007669"/>
    <property type="project" value="TreeGrafter"/>
</dbReference>
<dbReference type="CDD" id="cd11740">
    <property type="entry name" value="YajQ_like"/>
    <property type="match status" value="1"/>
</dbReference>
<dbReference type="Gene3D" id="3.30.70.860">
    <property type="match status" value="1"/>
</dbReference>
<dbReference type="Gene3D" id="3.30.70.990">
    <property type="entry name" value="YajQ-like, domain 2"/>
    <property type="match status" value="1"/>
</dbReference>
<dbReference type="HAMAP" id="MF_00632">
    <property type="entry name" value="YajQ"/>
    <property type="match status" value="1"/>
</dbReference>
<dbReference type="InterPro" id="IPR007551">
    <property type="entry name" value="DUF520"/>
</dbReference>
<dbReference type="InterPro" id="IPR035571">
    <property type="entry name" value="UPF0234-like_C"/>
</dbReference>
<dbReference type="InterPro" id="IPR035570">
    <property type="entry name" value="UPF0234_N"/>
</dbReference>
<dbReference type="InterPro" id="IPR036183">
    <property type="entry name" value="YajQ-like_sf"/>
</dbReference>
<dbReference type="NCBIfam" id="NF003819">
    <property type="entry name" value="PRK05412.1"/>
    <property type="match status" value="1"/>
</dbReference>
<dbReference type="PANTHER" id="PTHR30476">
    <property type="entry name" value="UPF0234 PROTEIN YAJQ"/>
    <property type="match status" value="1"/>
</dbReference>
<dbReference type="PANTHER" id="PTHR30476:SF0">
    <property type="entry name" value="UPF0234 PROTEIN YAJQ"/>
    <property type="match status" value="1"/>
</dbReference>
<dbReference type="Pfam" id="PF04461">
    <property type="entry name" value="DUF520"/>
    <property type="match status" value="1"/>
</dbReference>
<dbReference type="SUPFAM" id="SSF89963">
    <property type="entry name" value="YajQ-like"/>
    <property type="match status" value="2"/>
</dbReference>
<protein>
    <recommendedName>
        <fullName evidence="1">Nucleotide-binding protein Pnec_0318</fullName>
    </recommendedName>
</protein>
<sequence length="161" mass="18310">MPSFDVVCEPDMIELKNAIEQSNKEITNRFDFKGSDSRVEQKDEALILFGDDDFKLGQVRDVLINKMAKRNVDVRYLKDDKTETISGDKRKQTMKIQKGITSELAKKVVRIIKDSKIKVQASIQGDAVRVTGGKRDDLQETMALLKKEVTEAPLGFNNFRD</sequence>
<feature type="chain" id="PRO_1000130639" description="Nucleotide-binding protein Pnec_0318">
    <location>
        <begin position="1"/>
        <end position="161"/>
    </location>
</feature>
<proteinExistence type="inferred from homology"/>
<organism>
    <name type="scientific">Polynucleobacter necessarius subsp. necessarius (strain STIR1)</name>
    <dbReference type="NCBI Taxonomy" id="452638"/>
    <lineage>
        <taxon>Bacteria</taxon>
        <taxon>Pseudomonadati</taxon>
        <taxon>Pseudomonadota</taxon>
        <taxon>Betaproteobacteria</taxon>
        <taxon>Burkholderiales</taxon>
        <taxon>Burkholderiaceae</taxon>
        <taxon>Polynucleobacter</taxon>
    </lineage>
</organism>
<accession>B1XTD4</accession>
<reference key="1">
    <citation type="journal article" date="2013" name="Proc. Natl. Acad. Sci. U.S.A.">
        <title>Polynucleobacter necessarius, a model for genome reduction in both free-living and symbiotic bacteria.</title>
        <authorList>
            <person name="Boscaro V."/>
            <person name="Felletti M."/>
            <person name="Vannini C."/>
            <person name="Ackerman M.S."/>
            <person name="Chain P.S."/>
            <person name="Malfatti S."/>
            <person name="Vergez L.M."/>
            <person name="Shin M."/>
            <person name="Doak T.G."/>
            <person name="Lynch M."/>
            <person name="Petroni G."/>
        </authorList>
    </citation>
    <scope>NUCLEOTIDE SEQUENCE [LARGE SCALE GENOMIC DNA]</scope>
    <source>
        <strain>STIR1</strain>
    </source>
</reference>
<evidence type="ECO:0000255" key="1">
    <source>
        <dbReference type="HAMAP-Rule" id="MF_00632"/>
    </source>
</evidence>
<comment type="function">
    <text evidence="1">Nucleotide-binding protein.</text>
</comment>
<comment type="similarity">
    <text evidence="1">Belongs to the YajQ family.</text>
</comment>
<keyword id="KW-0547">Nucleotide-binding</keyword>